<keyword id="KW-0903">Direct protein sequencing</keyword>
<keyword id="KW-0249">Electron transport</keyword>
<keyword id="KW-0349">Heme</keyword>
<keyword id="KW-0408">Iron</keyword>
<keyword id="KW-0472">Membrane</keyword>
<keyword id="KW-0479">Metal-binding</keyword>
<keyword id="KW-0602">Photosynthesis</keyword>
<keyword id="KW-0604">Photosystem II</keyword>
<keyword id="KW-1185">Reference proteome</keyword>
<keyword id="KW-0732">Signal</keyword>
<keyword id="KW-0793">Thylakoid</keyword>
<keyword id="KW-0813">Transport</keyword>
<protein>
    <recommendedName>
        <fullName evidence="1">Photosystem II extrinsic protein V</fullName>
        <shortName evidence="1">PsbV</shortName>
    </recommendedName>
    <alternativeName>
        <fullName evidence="1">Cytochrome c-550</fullName>
    </alternativeName>
    <alternativeName>
        <fullName evidence="1 3">Cytochrome c550</fullName>
    </alternativeName>
    <alternativeName>
        <fullName evidence="1">Low-potential cytochrome c</fullName>
    </alternativeName>
</protein>
<feature type="signal peptide" evidence="1 2">
    <location>
        <begin position="1"/>
        <end position="34"/>
    </location>
</feature>
<feature type="chain" id="PRO_0000006520" description="Photosystem II extrinsic protein V">
    <location>
        <begin position="35"/>
        <end position="170"/>
    </location>
</feature>
<feature type="binding site" description="covalent" evidence="1">
    <location>
        <position position="70"/>
    </location>
    <ligand>
        <name>heme c</name>
        <dbReference type="ChEBI" id="CHEBI:61717"/>
    </ligand>
</feature>
<feature type="binding site" description="covalent" evidence="1">
    <location>
        <position position="73"/>
    </location>
    <ligand>
        <name>heme c</name>
        <dbReference type="ChEBI" id="CHEBI:61717"/>
    </ligand>
</feature>
<feature type="binding site" description="axial binding residue" evidence="1">
    <location>
        <position position="74"/>
    </location>
    <ligand>
        <name>heme c</name>
        <dbReference type="ChEBI" id="CHEBI:61717"/>
    </ligand>
    <ligandPart>
        <name>Fe</name>
        <dbReference type="ChEBI" id="CHEBI:18248"/>
    </ligandPart>
</feature>
<feature type="binding site" description="axial binding residue" evidence="1">
    <location>
        <position position="125"/>
    </location>
    <ligand>
        <name>heme c</name>
        <dbReference type="ChEBI" id="CHEBI:61717"/>
    </ligand>
    <ligandPart>
        <name>Fe</name>
        <dbReference type="ChEBI" id="CHEBI:18248"/>
    </ligandPart>
</feature>
<feature type="sequence conflict" description="In Ref. 1; BAA06173." evidence="4" ref="1">
    <original>G</original>
    <variation>V</variation>
    <location>
        <position position="117"/>
    </location>
</feature>
<accession>Q55210</accession>
<accession>B1XLG7</accession>
<evidence type="ECO:0000255" key="1">
    <source>
        <dbReference type="HAMAP-Rule" id="MF_01378"/>
    </source>
</evidence>
<evidence type="ECO:0000269" key="2">
    <source>
    </source>
</evidence>
<evidence type="ECO:0000303" key="3">
    <source>
    </source>
</evidence>
<evidence type="ECO:0000305" key="4"/>
<organism>
    <name type="scientific">Picosynechococcus sp. (strain ATCC 27264 / PCC 7002 / PR-6)</name>
    <name type="common">Agmenellum quadruplicatum</name>
    <dbReference type="NCBI Taxonomy" id="32049"/>
    <lineage>
        <taxon>Bacteria</taxon>
        <taxon>Bacillati</taxon>
        <taxon>Cyanobacteriota</taxon>
        <taxon>Cyanophyceae</taxon>
        <taxon>Oscillatoriophycideae</taxon>
        <taxon>Chroococcales</taxon>
        <taxon>Geminocystaceae</taxon>
        <taxon>Picosynechococcus</taxon>
    </lineage>
</organism>
<sequence>MNKILGIDPLKKFIFGISAFVLLFWQLNVGAANATALREVDRTVNLNETETVVLSDQQVAKGERIFINTCSTCHNSGRTKSNPNVTLSLVDLEGAEPRRDNILAMVDYLKNPTSYDGELDLSQLHPNTVRADIWSSMRNLNEEDLQNVSGYVLVQAQVRGVAWGGGKTVN</sequence>
<reference key="1">
    <citation type="journal article" date="1994" name="Plant Physiol.">
        <title>Photosynthetic oxygen evolution is stabilized by cytochrome c550 against heat inactivation in Synechococcus sp. PCC 7002.</title>
        <authorList>
            <person name="Nishiyama Y."/>
            <person name="Hayashi H."/>
            <person name="Watanabe T."/>
            <person name="Murata N."/>
        </authorList>
    </citation>
    <scope>NUCLEOTIDE SEQUENCE [GENOMIC DNA]</scope>
    <scope>PROTEIN SEQUENCE OF 35-58</scope>
    <scope>FUNCTION</scope>
    <scope>SUBCELLULAR LOCATION</scope>
    <scope>ASSOCIATION OF THE PROTEIN WITH THYLAKOID MEMBRANES</scope>
</reference>
<reference key="2">
    <citation type="submission" date="2008-02" db="EMBL/GenBank/DDBJ databases">
        <title>Complete sequence of Synechococcus sp. PCC 7002.</title>
        <authorList>
            <person name="Li T."/>
            <person name="Zhao J."/>
            <person name="Zhao C."/>
            <person name="Liu Z."/>
            <person name="Zhao F."/>
            <person name="Marquardt J."/>
            <person name="Nomura C.T."/>
            <person name="Persson S."/>
            <person name="Detter J.C."/>
            <person name="Richardson P.M."/>
            <person name="Lanz C."/>
            <person name="Schuster S.C."/>
            <person name="Wang J."/>
            <person name="Li S."/>
            <person name="Huang X."/>
            <person name="Cai T."/>
            <person name="Yu Z."/>
            <person name="Luo J."/>
            <person name="Zhao J."/>
            <person name="Bryant D.A."/>
        </authorList>
    </citation>
    <scope>NUCLEOTIDE SEQUENCE [LARGE SCALE GENOMIC DNA]</scope>
    <source>
        <strain>ATCC 27264 / PCC 7002 / PR-6</strain>
    </source>
</reference>
<dbReference type="EMBL" id="D29788">
    <property type="protein sequence ID" value="BAA06173.1"/>
    <property type="molecule type" value="Genomic_DNA"/>
</dbReference>
<dbReference type="EMBL" id="CP000951">
    <property type="protein sequence ID" value="ACA98127.1"/>
    <property type="molecule type" value="Genomic_DNA"/>
</dbReference>
<dbReference type="RefSeq" id="WP_012305751.1">
    <property type="nucleotide sequence ID" value="NZ_JAHHPU010000005.1"/>
</dbReference>
<dbReference type="SMR" id="Q55210"/>
<dbReference type="STRING" id="32049.SYNPCC7002_A0112"/>
<dbReference type="KEGG" id="syp:SYNPCC7002_A0112"/>
<dbReference type="eggNOG" id="COG2010">
    <property type="taxonomic scope" value="Bacteria"/>
</dbReference>
<dbReference type="HOGENOM" id="CLU_104149_1_0_3"/>
<dbReference type="Proteomes" id="UP000001688">
    <property type="component" value="Chromosome"/>
</dbReference>
<dbReference type="GO" id="GO:0009523">
    <property type="term" value="C:photosystem II"/>
    <property type="evidence" value="ECO:0007669"/>
    <property type="project" value="UniProtKB-KW"/>
</dbReference>
<dbReference type="GO" id="GO:0031676">
    <property type="term" value="C:plasma membrane-derived thylakoid membrane"/>
    <property type="evidence" value="ECO:0007669"/>
    <property type="project" value="UniProtKB-SubCell"/>
</dbReference>
<dbReference type="GO" id="GO:0009055">
    <property type="term" value="F:electron transfer activity"/>
    <property type="evidence" value="ECO:0007669"/>
    <property type="project" value="InterPro"/>
</dbReference>
<dbReference type="GO" id="GO:0020037">
    <property type="term" value="F:heme binding"/>
    <property type="evidence" value="ECO:0007669"/>
    <property type="project" value="InterPro"/>
</dbReference>
<dbReference type="GO" id="GO:0005506">
    <property type="term" value="F:iron ion binding"/>
    <property type="evidence" value="ECO:0007669"/>
    <property type="project" value="InterPro"/>
</dbReference>
<dbReference type="GO" id="GO:0019684">
    <property type="term" value="P:photosynthesis, light reaction"/>
    <property type="evidence" value="ECO:0007669"/>
    <property type="project" value="UniProtKB-UniRule"/>
</dbReference>
<dbReference type="GO" id="GO:0022904">
    <property type="term" value="P:respiratory electron transport chain"/>
    <property type="evidence" value="ECO:0007669"/>
    <property type="project" value="InterPro"/>
</dbReference>
<dbReference type="Gene3D" id="1.10.760.10">
    <property type="entry name" value="Cytochrome c-like domain"/>
    <property type="match status" value="1"/>
</dbReference>
<dbReference type="HAMAP" id="MF_01378">
    <property type="entry name" value="PSII_Cyt550"/>
    <property type="match status" value="1"/>
</dbReference>
<dbReference type="InterPro" id="IPR009056">
    <property type="entry name" value="Cyt_c-like_dom"/>
</dbReference>
<dbReference type="InterPro" id="IPR036909">
    <property type="entry name" value="Cyt_c-like_dom_sf"/>
</dbReference>
<dbReference type="InterPro" id="IPR029490">
    <property type="entry name" value="Cytochrom_C550"/>
</dbReference>
<dbReference type="InterPro" id="IPR017851">
    <property type="entry name" value="PsbV_cyt_c550"/>
</dbReference>
<dbReference type="InterPro" id="IPR016003">
    <property type="entry name" value="PsbV_cyt_c550-like"/>
</dbReference>
<dbReference type="NCBIfam" id="TIGR03045">
    <property type="entry name" value="PS_II_C550"/>
    <property type="match status" value="1"/>
</dbReference>
<dbReference type="Pfam" id="PF14495">
    <property type="entry name" value="Cytochrom_C550"/>
    <property type="match status" value="1"/>
</dbReference>
<dbReference type="PIRSF" id="PIRSF005890">
    <property type="entry name" value="Phot_II_cyt_c550"/>
    <property type="match status" value="1"/>
</dbReference>
<dbReference type="SUPFAM" id="SSF46626">
    <property type="entry name" value="Cytochrome c"/>
    <property type="match status" value="1"/>
</dbReference>
<dbReference type="PROSITE" id="PS51007">
    <property type="entry name" value="CYTC"/>
    <property type="match status" value="1"/>
</dbReference>
<proteinExistence type="evidence at protein level"/>
<gene>
    <name evidence="1" type="primary">psbV</name>
    <name type="synonym">cytCLP</name>
    <name type="ordered locus">SYNPCC7002_A0112</name>
</gene>
<comment type="function">
    <text evidence="1 2">One of the extrinsic, lumenal subunits of photosystem II (PSII). PSII is a light-driven water plastoquinone oxidoreductase, using light energy to abstract electrons from H(2)O, generating a proton gradient subsequently used for ATP formation. The extrinsic proteins stabilize the structure of photosystem II oxygen-evolving complex (OEC), the ion environment of oxygen evolution and protect the OEC against heat-induced inactivation. Low-potential cytochrome c that plays a role in the OEC of PSII.</text>
</comment>
<comment type="cofactor">
    <cofactor evidence="1">
        <name>heme c</name>
        <dbReference type="ChEBI" id="CHEBI:61717"/>
    </cofactor>
    <text evidence="1">Binds 1 heme c group covalently per subunit.</text>
</comment>
<comment type="subunit">
    <text evidence="1">PSII is composed of 1 copy each of membrane proteins PsbA, PsbB, PsbC, PsbD, PsbE, PsbF, PsbH, PsbI, PsbJ, PsbK, PsbL, PsbM, PsbT, PsbX, PsbY, PsbZ, Psb30/Ycf12, peripheral proteins PsbO, CyanoQ (PsbQ), PsbU, PsbV and a large number of cofactors. It forms dimeric complexes.</text>
</comment>
<comment type="subcellular location">
    <subcellularLocation>
        <location evidence="1 2">Cellular thylakoid membrane</location>
        <topology evidence="1 2">Peripheral membrane protein</topology>
        <orientation evidence="1 2">Lumenal side</orientation>
    </subcellularLocation>
    <text evidence="1">Associated with photosystem II at the lumenal side of the thylakoid membrane.</text>
</comment>
<comment type="similarity">
    <text evidence="1">Belongs to the cytochrome c family. PsbV subfamily.</text>
</comment>
<name>CY550_PICP2</name>